<dbReference type="EC" id="1.4.4.2" evidence="1"/>
<dbReference type="EMBL" id="CP001358">
    <property type="protein sequence ID" value="ACL48696.1"/>
    <property type="molecule type" value="Genomic_DNA"/>
</dbReference>
<dbReference type="SMR" id="B8IYW9"/>
<dbReference type="STRING" id="525146.Ddes_0788"/>
<dbReference type="KEGG" id="dds:Ddes_0788"/>
<dbReference type="eggNOG" id="COG0403">
    <property type="taxonomic scope" value="Bacteria"/>
</dbReference>
<dbReference type="HOGENOM" id="CLU_004620_0_2_7"/>
<dbReference type="GO" id="GO:0004375">
    <property type="term" value="F:glycine dehydrogenase (decarboxylating) activity"/>
    <property type="evidence" value="ECO:0007669"/>
    <property type="project" value="UniProtKB-EC"/>
</dbReference>
<dbReference type="GO" id="GO:0019464">
    <property type="term" value="P:glycine decarboxylation via glycine cleavage system"/>
    <property type="evidence" value="ECO:0007669"/>
    <property type="project" value="UniProtKB-UniRule"/>
</dbReference>
<dbReference type="GO" id="GO:0009116">
    <property type="term" value="P:nucleoside metabolic process"/>
    <property type="evidence" value="ECO:0007669"/>
    <property type="project" value="InterPro"/>
</dbReference>
<dbReference type="Gene3D" id="3.90.1150.10">
    <property type="entry name" value="Aspartate Aminotransferase, domain 1"/>
    <property type="match status" value="1"/>
</dbReference>
<dbReference type="Gene3D" id="3.40.640.10">
    <property type="entry name" value="Type I PLP-dependent aspartate aminotransferase-like (Major domain)"/>
    <property type="match status" value="1"/>
</dbReference>
<dbReference type="HAMAP" id="MF_00712">
    <property type="entry name" value="GcvPA"/>
    <property type="match status" value="1"/>
</dbReference>
<dbReference type="InterPro" id="IPR023010">
    <property type="entry name" value="GcvPA"/>
</dbReference>
<dbReference type="InterPro" id="IPR049315">
    <property type="entry name" value="GDC-P_N"/>
</dbReference>
<dbReference type="InterPro" id="IPR015424">
    <property type="entry name" value="PyrdxlP-dep_Trfase"/>
</dbReference>
<dbReference type="InterPro" id="IPR015421">
    <property type="entry name" value="PyrdxlP-dep_Trfase_major"/>
</dbReference>
<dbReference type="InterPro" id="IPR015422">
    <property type="entry name" value="PyrdxlP-dep_Trfase_small"/>
</dbReference>
<dbReference type="NCBIfam" id="NF001696">
    <property type="entry name" value="PRK00451.1"/>
    <property type="match status" value="1"/>
</dbReference>
<dbReference type="PANTHER" id="PTHR42806">
    <property type="entry name" value="GLYCINE CLEAVAGE SYSTEM P-PROTEIN"/>
    <property type="match status" value="1"/>
</dbReference>
<dbReference type="PANTHER" id="PTHR42806:SF1">
    <property type="entry name" value="GLYCINE DEHYDROGENASE (DECARBOXYLATING)"/>
    <property type="match status" value="1"/>
</dbReference>
<dbReference type="Pfam" id="PF02347">
    <property type="entry name" value="GDC-P"/>
    <property type="match status" value="1"/>
</dbReference>
<dbReference type="PIRSF" id="PIRSF006815">
    <property type="entry name" value="GcvPA"/>
    <property type="match status" value="1"/>
</dbReference>
<dbReference type="SUPFAM" id="SSF53383">
    <property type="entry name" value="PLP-dependent transferases"/>
    <property type="match status" value="1"/>
</dbReference>
<proteinExistence type="inferred from homology"/>
<reference key="1">
    <citation type="submission" date="2009-01" db="EMBL/GenBank/DDBJ databases">
        <title>Complete sequence of Desulfovibrio desulfuricans subsp. desulfuricans str. ATCC 27774.</title>
        <authorList>
            <consortium name="US DOE Joint Genome Institute"/>
            <person name="Lucas S."/>
            <person name="Copeland A."/>
            <person name="Lapidus A."/>
            <person name="Glavina del Rio T."/>
            <person name="Tice H."/>
            <person name="Bruce D."/>
            <person name="Goodwin L."/>
            <person name="Pitluck S."/>
            <person name="Sims D."/>
            <person name="Lu M."/>
            <person name="Kiss H."/>
            <person name="Meineke L."/>
            <person name="Brettin T."/>
            <person name="Detter J.C."/>
            <person name="Han C."/>
            <person name="Larimer F."/>
            <person name="Land M."/>
            <person name="Hauser L."/>
            <person name="Kyrpides N."/>
            <person name="Ovchinnikova G."/>
            <person name="Hazen T.C."/>
        </authorList>
    </citation>
    <scope>NUCLEOTIDE SEQUENCE [LARGE SCALE GENOMIC DNA]</scope>
    <source>
        <strain>ATCC 27774 / DSM 6949 / MB</strain>
    </source>
</reference>
<keyword id="KW-0560">Oxidoreductase</keyword>
<feature type="chain" id="PRO_1000147982" description="Probable glycine dehydrogenase (decarboxylating) subunit 1">
    <location>
        <begin position="1"/>
        <end position="443"/>
    </location>
</feature>
<accession>B8IYW9</accession>
<sequence length="443" mass="48098">MPYIPHTPEELQEMLSVVGVRDLDGLFADIPPEMRPKQFNLPKGQSEAAVCAYFEGLAAKNCPDLVSFLGAGYYAHDIPKAVDALAGRSEFYTSYTPYQPECSQGTLQAIFEFQTAISRLLGMDCANASVYDGGTAIFEAAMMAVRSTRRRVLVVDEAVNPIWRVMLASYISSLDLELKTVQQEKGVSRLDALMAAIDDTTAAVIVQNPNFFGAVADYTQVFAKARAHKAFGVISVYPVMQSVLKTPGEMGADVAVAEGQSIGMPLSFGGPYLGLMTCRKEHIRQFPGRIVGRTTDVDGKTGYVLTLQAREQHIRRAKATSNICSNQALCALRALIHLSLLGPCGLTRLAENNMALTRYAVERLTSIKGIELLNDAPYGNEVALRLPMPAQMLVDALSAHGCVPGYPLGRYYPGMEDVLLLACTERNSRQQIGMLAETVGGLL</sequence>
<name>GCSPA_DESDA</name>
<organism>
    <name type="scientific">Desulfovibrio desulfuricans (strain ATCC 27774 / DSM 6949 / MB)</name>
    <dbReference type="NCBI Taxonomy" id="525146"/>
    <lineage>
        <taxon>Bacteria</taxon>
        <taxon>Pseudomonadati</taxon>
        <taxon>Thermodesulfobacteriota</taxon>
        <taxon>Desulfovibrionia</taxon>
        <taxon>Desulfovibrionales</taxon>
        <taxon>Desulfovibrionaceae</taxon>
        <taxon>Desulfovibrio</taxon>
    </lineage>
</organism>
<comment type="function">
    <text evidence="1">The glycine cleavage system catalyzes the degradation of glycine. The P protein binds the alpha-amino group of glycine through its pyridoxal phosphate cofactor; CO(2) is released and the remaining methylamine moiety is then transferred to the lipoamide cofactor of the H protein.</text>
</comment>
<comment type="catalytic activity">
    <reaction evidence="1">
        <text>N(6)-[(R)-lipoyl]-L-lysyl-[glycine-cleavage complex H protein] + glycine + H(+) = N(6)-[(R)-S(8)-aminomethyldihydrolipoyl]-L-lysyl-[glycine-cleavage complex H protein] + CO2</text>
        <dbReference type="Rhea" id="RHEA:24304"/>
        <dbReference type="Rhea" id="RHEA-COMP:10494"/>
        <dbReference type="Rhea" id="RHEA-COMP:10495"/>
        <dbReference type="ChEBI" id="CHEBI:15378"/>
        <dbReference type="ChEBI" id="CHEBI:16526"/>
        <dbReference type="ChEBI" id="CHEBI:57305"/>
        <dbReference type="ChEBI" id="CHEBI:83099"/>
        <dbReference type="ChEBI" id="CHEBI:83143"/>
        <dbReference type="EC" id="1.4.4.2"/>
    </reaction>
</comment>
<comment type="subunit">
    <text evidence="1">The glycine cleavage system is composed of four proteins: P, T, L and H. In this organism, the P 'protein' is a heterodimer of two subunits.</text>
</comment>
<comment type="similarity">
    <text evidence="1">Belongs to the GcvP family. N-terminal subunit subfamily.</text>
</comment>
<protein>
    <recommendedName>
        <fullName evidence="1">Probable glycine dehydrogenase (decarboxylating) subunit 1</fullName>
        <ecNumber evidence="1">1.4.4.2</ecNumber>
    </recommendedName>
    <alternativeName>
        <fullName evidence="1">Glycine cleavage system P-protein subunit 1</fullName>
    </alternativeName>
    <alternativeName>
        <fullName evidence="1">Glycine decarboxylase subunit 1</fullName>
    </alternativeName>
    <alternativeName>
        <fullName evidence="1">Glycine dehydrogenase (aminomethyl-transferring) subunit 1</fullName>
    </alternativeName>
</protein>
<evidence type="ECO:0000255" key="1">
    <source>
        <dbReference type="HAMAP-Rule" id="MF_00712"/>
    </source>
</evidence>
<gene>
    <name evidence="1" type="primary">gcvPA</name>
    <name type="ordered locus">Ddes_0788</name>
</gene>